<feature type="chain" id="PRO_0000371901" description="NADH-quinone oxidoreductase subunit D">
    <location>
        <begin position="1"/>
        <end position="417"/>
    </location>
</feature>
<protein>
    <recommendedName>
        <fullName evidence="1">NADH-quinone oxidoreductase subunit D</fullName>
        <ecNumber evidence="1">7.1.1.-</ecNumber>
    </recommendedName>
    <alternativeName>
        <fullName evidence="1">NADH dehydrogenase I subunit D</fullName>
    </alternativeName>
    <alternativeName>
        <fullName evidence="1">NDH-1 subunit D</fullName>
    </alternativeName>
</protein>
<sequence length="417" mass="47483">MAEIKNYTLNFGPQHPAAHGVLRLVLELDGEVIQRADPHIGLLHRATEKLAESKTYIQSLPYMDRLDYVSMMSNEHAYCLAIEKLLGVDVPIRAQYIRVMFSEITRLLNHLMWLGAHGLDCGAMNMLIYCFREREVLFDMYEAVSGARMHAAYFRPGGVYRDLPESMSQYKVNKIRNAKAIDALNENRQGSLLDFIDDFVTKFPKLVDEYETLLTDNRIWKQRTVGVGVVSPERALNLGFTGPMLRGSGFAWDLRKQQPYEVYAQMDFDIPVGKTGDCYDRYLVRVAEMRQSNRIIKQCVDWLRVNSGPVITSNHKVAPPNRESMKSNMEELIHHFKLFTEGFHVPEGEAYAAVEHPKGEFGIYIVSDGANKPYRLKIRPPGFSHLAAMDEMSRGHMIADAVAVIGTMDIVFGEIDR</sequence>
<proteinExistence type="inferred from homology"/>
<evidence type="ECO:0000255" key="1">
    <source>
        <dbReference type="HAMAP-Rule" id="MF_01358"/>
    </source>
</evidence>
<keyword id="KW-0997">Cell inner membrane</keyword>
<keyword id="KW-1003">Cell membrane</keyword>
<keyword id="KW-0472">Membrane</keyword>
<keyword id="KW-0520">NAD</keyword>
<keyword id="KW-0874">Quinone</keyword>
<keyword id="KW-1185">Reference proteome</keyword>
<keyword id="KW-1278">Translocase</keyword>
<keyword id="KW-0813">Transport</keyword>
<keyword id="KW-0830">Ubiquinone</keyword>
<gene>
    <name evidence="1" type="primary">nuoD</name>
    <name type="ordered locus">Pnap_1427</name>
</gene>
<organism>
    <name type="scientific">Polaromonas naphthalenivorans (strain CJ2)</name>
    <dbReference type="NCBI Taxonomy" id="365044"/>
    <lineage>
        <taxon>Bacteria</taxon>
        <taxon>Pseudomonadati</taxon>
        <taxon>Pseudomonadota</taxon>
        <taxon>Betaproteobacteria</taxon>
        <taxon>Burkholderiales</taxon>
        <taxon>Comamonadaceae</taxon>
        <taxon>Polaromonas</taxon>
    </lineage>
</organism>
<reference key="1">
    <citation type="journal article" date="2009" name="Environ. Microbiol.">
        <title>The genome of Polaromonas naphthalenivorans strain CJ2, isolated from coal tar-contaminated sediment, reveals physiological and metabolic versatility and evolution through extensive horizontal gene transfer.</title>
        <authorList>
            <person name="Yagi J.M."/>
            <person name="Sims D."/>
            <person name="Brettin T."/>
            <person name="Bruce D."/>
            <person name="Madsen E.L."/>
        </authorList>
    </citation>
    <scope>NUCLEOTIDE SEQUENCE [LARGE SCALE GENOMIC DNA]</scope>
    <source>
        <strain>CJ2</strain>
    </source>
</reference>
<dbReference type="EC" id="7.1.1.-" evidence="1"/>
<dbReference type="EMBL" id="CP000529">
    <property type="protein sequence ID" value="ABM36741.1"/>
    <property type="molecule type" value="Genomic_DNA"/>
</dbReference>
<dbReference type="RefSeq" id="WP_011800828.1">
    <property type="nucleotide sequence ID" value="NC_008781.1"/>
</dbReference>
<dbReference type="SMR" id="A1VM63"/>
<dbReference type="STRING" id="365044.Pnap_1427"/>
<dbReference type="KEGG" id="pna:Pnap_1427"/>
<dbReference type="eggNOG" id="COG0649">
    <property type="taxonomic scope" value="Bacteria"/>
</dbReference>
<dbReference type="HOGENOM" id="CLU_015134_1_1_4"/>
<dbReference type="OrthoDB" id="9801496at2"/>
<dbReference type="Proteomes" id="UP000000644">
    <property type="component" value="Chromosome"/>
</dbReference>
<dbReference type="GO" id="GO:0005886">
    <property type="term" value="C:plasma membrane"/>
    <property type="evidence" value="ECO:0007669"/>
    <property type="project" value="UniProtKB-SubCell"/>
</dbReference>
<dbReference type="GO" id="GO:0051287">
    <property type="term" value="F:NAD binding"/>
    <property type="evidence" value="ECO:0007669"/>
    <property type="project" value="InterPro"/>
</dbReference>
<dbReference type="GO" id="GO:0050136">
    <property type="term" value="F:NADH:ubiquinone reductase (non-electrogenic) activity"/>
    <property type="evidence" value="ECO:0007669"/>
    <property type="project" value="UniProtKB-UniRule"/>
</dbReference>
<dbReference type="GO" id="GO:0048038">
    <property type="term" value="F:quinone binding"/>
    <property type="evidence" value="ECO:0007669"/>
    <property type="project" value="UniProtKB-KW"/>
</dbReference>
<dbReference type="FunFam" id="1.10.645.10:FF:000005">
    <property type="entry name" value="NADH-quinone oxidoreductase subunit D"/>
    <property type="match status" value="1"/>
</dbReference>
<dbReference type="Gene3D" id="1.10.645.10">
    <property type="entry name" value="Cytochrome-c3 Hydrogenase, chain B"/>
    <property type="match status" value="1"/>
</dbReference>
<dbReference type="HAMAP" id="MF_01358">
    <property type="entry name" value="NDH1_NuoD"/>
    <property type="match status" value="1"/>
</dbReference>
<dbReference type="InterPro" id="IPR001135">
    <property type="entry name" value="NADH_Q_OxRdtase_suD"/>
</dbReference>
<dbReference type="InterPro" id="IPR014029">
    <property type="entry name" value="NADH_UbQ_OxRdtase_49kDa_CS"/>
</dbReference>
<dbReference type="InterPro" id="IPR022885">
    <property type="entry name" value="NDH1_su_D/H"/>
</dbReference>
<dbReference type="InterPro" id="IPR029014">
    <property type="entry name" value="NiFe-Hase_large"/>
</dbReference>
<dbReference type="NCBIfam" id="TIGR01962">
    <property type="entry name" value="NuoD"/>
    <property type="match status" value="1"/>
</dbReference>
<dbReference type="NCBIfam" id="NF004739">
    <property type="entry name" value="PRK06075.1"/>
    <property type="match status" value="1"/>
</dbReference>
<dbReference type="PANTHER" id="PTHR11993:SF10">
    <property type="entry name" value="NADH DEHYDROGENASE [UBIQUINONE] IRON-SULFUR PROTEIN 2, MITOCHONDRIAL"/>
    <property type="match status" value="1"/>
</dbReference>
<dbReference type="PANTHER" id="PTHR11993">
    <property type="entry name" value="NADH-UBIQUINONE OXIDOREDUCTASE 49 KDA SUBUNIT"/>
    <property type="match status" value="1"/>
</dbReference>
<dbReference type="Pfam" id="PF00346">
    <property type="entry name" value="Complex1_49kDa"/>
    <property type="match status" value="1"/>
</dbReference>
<dbReference type="SUPFAM" id="SSF56762">
    <property type="entry name" value="HydB/Nqo4-like"/>
    <property type="match status" value="1"/>
</dbReference>
<dbReference type="PROSITE" id="PS00535">
    <property type="entry name" value="COMPLEX1_49K"/>
    <property type="match status" value="1"/>
</dbReference>
<accession>A1VM63</accession>
<comment type="function">
    <text evidence="1">NDH-1 shuttles electrons from NADH, via FMN and iron-sulfur (Fe-S) centers, to quinones in the respiratory chain. The immediate electron acceptor for the enzyme in this species is believed to be ubiquinone. Couples the redox reaction to proton translocation (for every two electrons transferred, four hydrogen ions are translocated across the cytoplasmic membrane), and thus conserves the redox energy in a proton gradient.</text>
</comment>
<comment type="catalytic activity">
    <reaction evidence="1">
        <text>a quinone + NADH + 5 H(+)(in) = a quinol + NAD(+) + 4 H(+)(out)</text>
        <dbReference type="Rhea" id="RHEA:57888"/>
        <dbReference type="ChEBI" id="CHEBI:15378"/>
        <dbReference type="ChEBI" id="CHEBI:24646"/>
        <dbReference type="ChEBI" id="CHEBI:57540"/>
        <dbReference type="ChEBI" id="CHEBI:57945"/>
        <dbReference type="ChEBI" id="CHEBI:132124"/>
    </reaction>
</comment>
<comment type="subunit">
    <text evidence="1">NDH-1 is composed of 14 different subunits. Subunits NuoB, C, D, E, F, and G constitute the peripheral sector of the complex.</text>
</comment>
<comment type="subcellular location">
    <subcellularLocation>
        <location evidence="1">Cell inner membrane</location>
        <topology evidence="1">Peripheral membrane protein</topology>
        <orientation evidence="1">Cytoplasmic side</orientation>
    </subcellularLocation>
</comment>
<comment type="similarity">
    <text evidence="1">Belongs to the complex I 49 kDa subunit family.</text>
</comment>
<name>NUOD_POLNA</name>